<evidence type="ECO:0000250" key="1"/>
<evidence type="ECO:0000256" key="2">
    <source>
        <dbReference type="SAM" id="MobiDB-lite"/>
    </source>
</evidence>
<evidence type="ECO:0000305" key="3"/>
<protein>
    <recommendedName>
        <fullName evidence="3">Large ribosomal subunit protein P2</fullName>
    </recommendedName>
    <alternativeName>
        <fullName>60S acidic ribosomal protein P2</fullName>
    </alternativeName>
    <alternativeName>
        <fullName>Acidic ribosomal protein 1</fullName>
    </alternativeName>
</protein>
<feature type="chain" id="PRO_0000157656" description="Large ribosomal subunit protein P2">
    <location>
        <begin position="1"/>
        <end position="105"/>
    </location>
</feature>
<feature type="region of interest" description="Disordered" evidence="2">
    <location>
        <begin position="84"/>
        <end position="105"/>
    </location>
</feature>
<dbReference type="EMBL" id="AF034539">
    <property type="protein sequence ID" value="AAB88451.1"/>
    <property type="molecule type" value="Genomic_DNA"/>
</dbReference>
<dbReference type="SMR" id="O43940"/>
<dbReference type="VEuPathDB" id="TriTrypDB:LdBPK_303780.1"/>
<dbReference type="VEuPathDB" id="TriTrypDB:LdCL_300043200"/>
<dbReference type="VEuPathDB" id="TriTrypDB:LDHU3_30.5030"/>
<dbReference type="GO" id="GO:0022625">
    <property type="term" value="C:cytosolic large ribosomal subunit"/>
    <property type="evidence" value="ECO:0007669"/>
    <property type="project" value="InterPro"/>
</dbReference>
<dbReference type="GO" id="GO:0003735">
    <property type="term" value="F:structural constituent of ribosome"/>
    <property type="evidence" value="ECO:0007669"/>
    <property type="project" value="InterPro"/>
</dbReference>
<dbReference type="GO" id="GO:0002182">
    <property type="term" value="P:cytoplasmic translational elongation"/>
    <property type="evidence" value="ECO:0007669"/>
    <property type="project" value="InterPro"/>
</dbReference>
<dbReference type="CDD" id="cd05833">
    <property type="entry name" value="Ribosomal_P2"/>
    <property type="match status" value="1"/>
</dbReference>
<dbReference type="FunFam" id="1.10.10.1410:FF:000002">
    <property type="entry name" value="60S acidic ribosomal protein P2"/>
    <property type="match status" value="1"/>
</dbReference>
<dbReference type="Gene3D" id="1.10.10.1410">
    <property type="match status" value="1"/>
</dbReference>
<dbReference type="HAMAP" id="MF_01478">
    <property type="entry name" value="Ribosomal_L12_arch"/>
    <property type="match status" value="1"/>
</dbReference>
<dbReference type="InterPro" id="IPR038716">
    <property type="entry name" value="P1/P2_N_sf"/>
</dbReference>
<dbReference type="InterPro" id="IPR027534">
    <property type="entry name" value="Ribosomal_P1/P2"/>
</dbReference>
<dbReference type="InterPro" id="IPR001859">
    <property type="entry name" value="Ribosomal_P1/P2_euk"/>
</dbReference>
<dbReference type="InterPro" id="IPR044076">
    <property type="entry name" value="Ribosomal_P2"/>
</dbReference>
<dbReference type="PANTHER" id="PTHR21141">
    <property type="entry name" value="60S ACIDIC RIBOSOMAL PROTEIN FAMILY MEMBER"/>
    <property type="match status" value="1"/>
</dbReference>
<dbReference type="PANTHER" id="PTHR21141:SF58">
    <property type="entry name" value="ACIDIC RIBOSOMAL PROTEIN P2, PUTATIVE-RELATED"/>
    <property type="match status" value="1"/>
</dbReference>
<dbReference type="Pfam" id="PF00428">
    <property type="entry name" value="Ribosomal_60s"/>
    <property type="match status" value="1"/>
</dbReference>
<dbReference type="PRINTS" id="PR00456">
    <property type="entry name" value="RIBOSOMALP2"/>
</dbReference>
<organism>
    <name type="scientific">Leishmania donovani</name>
    <dbReference type="NCBI Taxonomy" id="5661"/>
    <lineage>
        <taxon>Eukaryota</taxon>
        <taxon>Discoba</taxon>
        <taxon>Euglenozoa</taxon>
        <taxon>Kinetoplastea</taxon>
        <taxon>Metakinetoplastina</taxon>
        <taxon>Trypanosomatida</taxon>
        <taxon>Trypanosomatidae</taxon>
        <taxon>Leishmaniinae</taxon>
        <taxon>Leishmania</taxon>
    </lineage>
</organism>
<sequence length="105" mass="10446">MQYLAAYALVALSGKTPSKAAVEAVLKAAGVAVDASRVDAVFQELEGKSFDALVAEGRAKLVGSGSAAPAAAASTAAAAAAVVAEAKKEEPEEEADDDMGFGLFD</sequence>
<name>RLA2_LEIDO</name>
<keyword id="KW-0597">Phosphoprotein</keyword>
<keyword id="KW-0687">Ribonucleoprotein</keyword>
<keyword id="KW-0689">Ribosomal protein</keyword>
<accession>O43940</accession>
<reference key="1">
    <citation type="submission" date="1997-11" db="EMBL/GenBank/DDBJ databases">
        <authorList>
            <person name="Cheng J."/>
            <person name="Zhao W."/>
            <person name="Melby P.C."/>
        </authorList>
    </citation>
    <scope>NUCLEOTIDE SEQUENCE [GENOMIC DNA]</scope>
    <source>
        <strain>MHOM/SD/62/1S</strain>
    </source>
</reference>
<proteinExistence type="inferred from homology"/>
<comment type="function">
    <text>Plays an important role in the elongation step of protein synthesis.</text>
</comment>
<comment type="subunit">
    <text>P1 and P2 exist as dimers at the large ribosomal subunit.</text>
</comment>
<comment type="PTM">
    <text evidence="1">Phosphorylated.</text>
</comment>
<comment type="similarity">
    <text evidence="3">Belongs to the eukaryotic ribosomal protein P1/P2 family.</text>
</comment>
<gene>
    <name type="primary">ARP-1</name>
</gene>